<protein>
    <recommendedName>
        <fullName evidence="1">Quinolinate synthase</fullName>
        <ecNumber evidence="1">2.5.1.72</ecNumber>
    </recommendedName>
</protein>
<organism>
    <name type="scientific">Bacillus cereus (strain Q1)</name>
    <dbReference type="NCBI Taxonomy" id="361100"/>
    <lineage>
        <taxon>Bacteria</taxon>
        <taxon>Bacillati</taxon>
        <taxon>Bacillota</taxon>
        <taxon>Bacilli</taxon>
        <taxon>Bacillales</taxon>
        <taxon>Bacillaceae</taxon>
        <taxon>Bacillus</taxon>
        <taxon>Bacillus cereus group</taxon>
    </lineage>
</organism>
<dbReference type="EC" id="2.5.1.72" evidence="1"/>
<dbReference type="EMBL" id="CP000227">
    <property type="protein sequence ID" value="ACM14643.1"/>
    <property type="molecule type" value="Genomic_DNA"/>
</dbReference>
<dbReference type="SMR" id="B9IZ04"/>
<dbReference type="KEGG" id="bcq:BCQ_4216"/>
<dbReference type="HOGENOM" id="CLU_047382_2_0_9"/>
<dbReference type="UniPathway" id="UPA00253">
    <property type="reaction ID" value="UER00327"/>
</dbReference>
<dbReference type="Proteomes" id="UP000000441">
    <property type="component" value="Chromosome"/>
</dbReference>
<dbReference type="GO" id="GO:0005829">
    <property type="term" value="C:cytosol"/>
    <property type="evidence" value="ECO:0007669"/>
    <property type="project" value="TreeGrafter"/>
</dbReference>
<dbReference type="GO" id="GO:0051539">
    <property type="term" value="F:4 iron, 4 sulfur cluster binding"/>
    <property type="evidence" value="ECO:0007669"/>
    <property type="project" value="UniProtKB-KW"/>
</dbReference>
<dbReference type="GO" id="GO:0046872">
    <property type="term" value="F:metal ion binding"/>
    <property type="evidence" value="ECO:0007669"/>
    <property type="project" value="UniProtKB-KW"/>
</dbReference>
<dbReference type="GO" id="GO:0008987">
    <property type="term" value="F:quinolinate synthetase A activity"/>
    <property type="evidence" value="ECO:0007669"/>
    <property type="project" value="UniProtKB-UniRule"/>
</dbReference>
<dbReference type="GO" id="GO:0034628">
    <property type="term" value="P:'de novo' NAD biosynthetic process from L-aspartate"/>
    <property type="evidence" value="ECO:0007669"/>
    <property type="project" value="TreeGrafter"/>
</dbReference>
<dbReference type="FunFam" id="3.40.50.10800:FF:000001">
    <property type="entry name" value="Quinolinate synthase A"/>
    <property type="match status" value="1"/>
</dbReference>
<dbReference type="Gene3D" id="3.40.50.10800">
    <property type="entry name" value="NadA-like"/>
    <property type="match status" value="3"/>
</dbReference>
<dbReference type="HAMAP" id="MF_00569">
    <property type="entry name" value="NadA_type3"/>
    <property type="match status" value="1"/>
</dbReference>
<dbReference type="InterPro" id="IPR003473">
    <property type="entry name" value="NadA"/>
</dbReference>
<dbReference type="InterPro" id="IPR036094">
    <property type="entry name" value="NadA_sf"/>
</dbReference>
<dbReference type="InterPro" id="IPR023515">
    <property type="entry name" value="Quinolinate_synth_A_type3"/>
</dbReference>
<dbReference type="NCBIfam" id="TIGR00550">
    <property type="entry name" value="nadA"/>
    <property type="match status" value="1"/>
</dbReference>
<dbReference type="NCBIfam" id="NF006880">
    <property type="entry name" value="PRK09375.2-1"/>
    <property type="match status" value="1"/>
</dbReference>
<dbReference type="NCBIfam" id="NF006883">
    <property type="entry name" value="PRK09375.2-4"/>
    <property type="match status" value="1"/>
</dbReference>
<dbReference type="PANTHER" id="PTHR30573:SF0">
    <property type="entry name" value="QUINOLINATE SYNTHASE, CHLOROPLASTIC"/>
    <property type="match status" value="1"/>
</dbReference>
<dbReference type="PANTHER" id="PTHR30573">
    <property type="entry name" value="QUINOLINATE SYNTHETASE A"/>
    <property type="match status" value="1"/>
</dbReference>
<dbReference type="Pfam" id="PF02445">
    <property type="entry name" value="NadA"/>
    <property type="match status" value="1"/>
</dbReference>
<dbReference type="SUPFAM" id="SSF142754">
    <property type="entry name" value="NadA-like"/>
    <property type="match status" value="1"/>
</dbReference>
<accession>B9IZ04</accession>
<keyword id="KW-0004">4Fe-4S</keyword>
<keyword id="KW-0963">Cytoplasm</keyword>
<keyword id="KW-0408">Iron</keyword>
<keyword id="KW-0411">Iron-sulfur</keyword>
<keyword id="KW-0479">Metal-binding</keyword>
<keyword id="KW-0662">Pyridine nucleotide biosynthesis</keyword>
<keyword id="KW-0808">Transferase</keyword>
<sequence length="368" mass="41609">MSILEKVQPIETMLPERYYTMSTENMEKRVREIKEKMGGKLFIPGHHYQKDEVVQFSDAAGDSLQLAQVAASNKEAKYIVFCGVHFMAETADMLTTDDQIVILPDMRAGCSMADMADIEQTERAWKELMKLFGDTMIPLTYVNSTAAIKAFCGRNGGATVTSSNAKQMVSWAFTQKERLVFLPDQHLGRNTAYDLGIPLDKMAVWDPHTDSLEYDGDIEEIQVILWKGHCSVHQNFTVKNIENVRKNHPDMNIIVHPECCYEVVAASDYAGSTKYIIDMIESAPSGSKWAIGTEMNLVNRIIQQHPDKEIVSLNPFMCPCLTMNRIDLPHLLWALETIERGEEINVISVDKQVTEEAVLALNRMLERV</sequence>
<feature type="chain" id="PRO_1000146823" description="Quinolinate synthase">
    <location>
        <begin position="1"/>
        <end position="368"/>
    </location>
</feature>
<feature type="binding site" evidence="1">
    <location>
        <position position="46"/>
    </location>
    <ligand>
        <name>iminosuccinate</name>
        <dbReference type="ChEBI" id="CHEBI:77875"/>
    </ligand>
</feature>
<feature type="binding site" evidence="1">
    <location>
        <position position="63"/>
    </location>
    <ligand>
        <name>iminosuccinate</name>
        <dbReference type="ChEBI" id="CHEBI:77875"/>
    </ligand>
</feature>
<feature type="binding site" evidence="1">
    <location>
        <position position="110"/>
    </location>
    <ligand>
        <name>[4Fe-4S] cluster</name>
        <dbReference type="ChEBI" id="CHEBI:49883"/>
    </ligand>
</feature>
<feature type="binding site" evidence="1">
    <location>
        <begin position="141"/>
        <end position="143"/>
    </location>
    <ligand>
        <name>iminosuccinate</name>
        <dbReference type="ChEBI" id="CHEBI:77875"/>
    </ligand>
</feature>
<feature type="binding site" evidence="1">
    <location>
        <position position="162"/>
    </location>
    <ligand>
        <name>iminosuccinate</name>
        <dbReference type="ChEBI" id="CHEBI:77875"/>
    </ligand>
</feature>
<feature type="binding site" evidence="1">
    <location>
        <position position="230"/>
    </location>
    <ligand>
        <name>[4Fe-4S] cluster</name>
        <dbReference type="ChEBI" id="CHEBI:49883"/>
    </ligand>
</feature>
<feature type="binding site" evidence="1">
    <location>
        <begin position="256"/>
        <end position="258"/>
    </location>
    <ligand>
        <name>iminosuccinate</name>
        <dbReference type="ChEBI" id="CHEBI:77875"/>
    </ligand>
</feature>
<feature type="binding site" evidence="1">
    <location>
        <position position="273"/>
    </location>
    <ligand>
        <name>iminosuccinate</name>
        <dbReference type="ChEBI" id="CHEBI:77875"/>
    </ligand>
</feature>
<feature type="binding site" evidence="1">
    <location>
        <position position="320"/>
    </location>
    <ligand>
        <name>[4Fe-4S] cluster</name>
        <dbReference type="ChEBI" id="CHEBI:49883"/>
    </ligand>
</feature>
<evidence type="ECO:0000255" key="1">
    <source>
        <dbReference type="HAMAP-Rule" id="MF_00569"/>
    </source>
</evidence>
<comment type="function">
    <text evidence="1">Catalyzes the condensation of iminoaspartate with dihydroxyacetone phosphate to form quinolinate.</text>
</comment>
<comment type="catalytic activity">
    <reaction evidence="1">
        <text>iminosuccinate + dihydroxyacetone phosphate = quinolinate + phosphate + 2 H2O + H(+)</text>
        <dbReference type="Rhea" id="RHEA:25888"/>
        <dbReference type="ChEBI" id="CHEBI:15377"/>
        <dbReference type="ChEBI" id="CHEBI:15378"/>
        <dbReference type="ChEBI" id="CHEBI:29959"/>
        <dbReference type="ChEBI" id="CHEBI:43474"/>
        <dbReference type="ChEBI" id="CHEBI:57642"/>
        <dbReference type="ChEBI" id="CHEBI:77875"/>
        <dbReference type="EC" id="2.5.1.72"/>
    </reaction>
    <physiologicalReaction direction="left-to-right" evidence="1">
        <dbReference type="Rhea" id="RHEA:25889"/>
    </physiologicalReaction>
</comment>
<comment type="cofactor">
    <cofactor evidence="1">
        <name>[4Fe-4S] cluster</name>
        <dbReference type="ChEBI" id="CHEBI:49883"/>
    </cofactor>
    <text evidence="1">Binds 1 [4Fe-4S] cluster per subunit.</text>
</comment>
<comment type="pathway">
    <text evidence="1">Cofactor biosynthesis; NAD(+) biosynthesis; quinolinate from iminoaspartate: step 1/1.</text>
</comment>
<comment type="subcellular location">
    <subcellularLocation>
        <location evidence="1">Cytoplasm</location>
    </subcellularLocation>
</comment>
<comment type="similarity">
    <text evidence="1">Belongs to the quinolinate synthase family. Type 3 subfamily.</text>
</comment>
<reference key="1">
    <citation type="journal article" date="2009" name="J. Bacteriol.">
        <title>Complete genome sequence of the extremophilic Bacillus cereus strain Q1 with industrial applications.</title>
        <authorList>
            <person name="Xiong Z."/>
            <person name="Jiang Y."/>
            <person name="Qi D."/>
            <person name="Lu H."/>
            <person name="Yang F."/>
            <person name="Yang J."/>
            <person name="Chen L."/>
            <person name="Sun L."/>
            <person name="Xu X."/>
            <person name="Xue Y."/>
            <person name="Zhu Y."/>
            <person name="Jin Q."/>
        </authorList>
    </citation>
    <scope>NUCLEOTIDE SEQUENCE [LARGE SCALE GENOMIC DNA]</scope>
    <source>
        <strain>Q1</strain>
    </source>
</reference>
<gene>
    <name evidence="1" type="primary">nadA</name>
    <name type="ordered locus">BCQ_4216</name>
</gene>
<name>NADA_BACCQ</name>
<proteinExistence type="inferred from homology"/>